<dbReference type="EC" id="6.1.1.11" evidence="1"/>
<dbReference type="EMBL" id="CP001399">
    <property type="protein sequence ID" value="ACP35642.1"/>
    <property type="molecule type" value="Genomic_DNA"/>
</dbReference>
<dbReference type="RefSeq" id="WP_012713805.1">
    <property type="nucleotide sequence ID" value="NC_012589.1"/>
</dbReference>
<dbReference type="SMR" id="C3MQH9"/>
<dbReference type="GeneID" id="84058936"/>
<dbReference type="KEGG" id="sis:LS215_1638"/>
<dbReference type="HOGENOM" id="CLU_023797_0_1_2"/>
<dbReference type="OrthoDB" id="35932at2157"/>
<dbReference type="UniPathway" id="UPA00906">
    <property type="reaction ID" value="UER00895"/>
</dbReference>
<dbReference type="Proteomes" id="UP000001747">
    <property type="component" value="Chromosome"/>
</dbReference>
<dbReference type="GO" id="GO:0005737">
    <property type="term" value="C:cytoplasm"/>
    <property type="evidence" value="ECO:0007669"/>
    <property type="project" value="UniProtKB-SubCell"/>
</dbReference>
<dbReference type="GO" id="GO:0005524">
    <property type="term" value="F:ATP binding"/>
    <property type="evidence" value="ECO:0007669"/>
    <property type="project" value="UniProtKB-UniRule"/>
</dbReference>
<dbReference type="GO" id="GO:0004828">
    <property type="term" value="F:serine-tRNA ligase activity"/>
    <property type="evidence" value="ECO:0007669"/>
    <property type="project" value="UniProtKB-UniRule"/>
</dbReference>
<dbReference type="GO" id="GO:0016260">
    <property type="term" value="P:selenocysteine biosynthetic process"/>
    <property type="evidence" value="ECO:0007669"/>
    <property type="project" value="UniProtKB-UniRule"/>
</dbReference>
<dbReference type="GO" id="GO:0006434">
    <property type="term" value="P:seryl-tRNA aminoacylation"/>
    <property type="evidence" value="ECO:0007669"/>
    <property type="project" value="UniProtKB-UniRule"/>
</dbReference>
<dbReference type="CDD" id="cd00770">
    <property type="entry name" value="SerRS_core"/>
    <property type="match status" value="1"/>
</dbReference>
<dbReference type="FunFam" id="1.10.287.40:FF:000004">
    <property type="entry name" value="Serine--tRNA ligase"/>
    <property type="match status" value="1"/>
</dbReference>
<dbReference type="FunFam" id="3.30.930.10:FF:000048">
    <property type="entry name" value="Serine--tRNA ligase"/>
    <property type="match status" value="1"/>
</dbReference>
<dbReference type="Gene3D" id="3.30.930.10">
    <property type="entry name" value="Bira Bifunctional Protein, Domain 2"/>
    <property type="match status" value="1"/>
</dbReference>
<dbReference type="Gene3D" id="1.10.287.40">
    <property type="entry name" value="Serine-tRNA synthetase, tRNA binding domain"/>
    <property type="match status" value="1"/>
</dbReference>
<dbReference type="HAMAP" id="MF_00176">
    <property type="entry name" value="Ser_tRNA_synth_type1"/>
    <property type="match status" value="1"/>
</dbReference>
<dbReference type="InterPro" id="IPR002314">
    <property type="entry name" value="aa-tRNA-synt_IIb"/>
</dbReference>
<dbReference type="InterPro" id="IPR006195">
    <property type="entry name" value="aa-tRNA-synth_II"/>
</dbReference>
<dbReference type="InterPro" id="IPR045864">
    <property type="entry name" value="aa-tRNA-synth_II/BPL/LPL"/>
</dbReference>
<dbReference type="InterPro" id="IPR002317">
    <property type="entry name" value="Ser-tRNA-ligase_type_1"/>
</dbReference>
<dbReference type="InterPro" id="IPR015866">
    <property type="entry name" value="Ser-tRNA-synth_1_N"/>
</dbReference>
<dbReference type="InterPro" id="IPR042103">
    <property type="entry name" value="SerRS_1_N_sf"/>
</dbReference>
<dbReference type="InterPro" id="IPR033729">
    <property type="entry name" value="SerRS_core"/>
</dbReference>
<dbReference type="InterPro" id="IPR010978">
    <property type="entry name" value="tRNA-bd_arm"/>
</dbReference>
<dbReference type="NCBIfam" id="TIGR00414">
    <property type="entry name" value="serS"/>
    <property type="match status" value="1"/>
</dbReference>
<dbReference type="PANTHER" id="PTHR11778">
    <property type="entry name" value="SERYL-TRNA SYNTHETASE"/>
    <property type="match status" value="1"/>
</dbReference>
<dbReference type="Pfam" id="PF02403">
    <property type="entry name" value="Seryl_tRNA_N"/>
    <property type="match status" value="1"/>
</dbReference>
<dbReference type="Pfam" id="PF00587">
    <property type="entry name" value="tRNA-synt_2b"/>
    <property type="match status" value="1"/>
</dbReference>
<dbReference type="PIRSF" id="PIRSF001529">
    <property type="entry name" value="Ser-tRNA-synth_IIa"/>
    <property type="match status" value="1"/>
</dbReference>
<dbReference type="PRINTS" id="PR00981">
    <property type="entry name" value="TRNASYNTHSER"/>
</dbReference>
<dbReference type="SUPFAM" id="SSF55681">
    <property type="entry name" value="Class II aaRS and biotin synthetases"/>
    <property type="match status" value="1"/>
</dbReference>
<dbReference type="SUPFAM" id="SSF46589">
    <property type="entry name" value="tRNA-binding arm"/>
    <property type="match status" value="1"/>
</dbReference>
<dbReference type="PROSITE" id="PS50862">
    <property type="entry name" value="AA_TRNA_LIGASE_II"/>
    <property type="match status" value="1"/>
</dbReference>
<comment type="function">
    <text evidence="1">Catalyzes the attachment of serine to tRNA(Ser). Is also able to aminoacylate tRNA(Sec) with serine, to form the misacylated tRNA L-seryl-tRNA(Sec), which will be further converted into selenocysteinyl-tRNA(Sec).</text>
</comment>
<comment type="catalytic activity">
    <reaction evidence="1">
        <text>tRNA(Ser) + L-serine + ATP = L-seryl-tRNA(Ser) + AMP + diphosphate + H(+)</text>
        <dbReference type="Rhea" id="RHEA:12292"/>
        <dbReference type="Rhea" id="RHEA-COMP:9669"/>
        <dbReference type="Rhea" id="RHEA-COMP:9703"/>
        <dbReference type="ChEBI" id="CHEBI:15378"/>
        <dbReference type="ChEBI" id="CHEBI:30616"/>
        <dbReference type="ChEBI" id="CHEBI:33019"/>
        <dbReference type="ChEBI" id="CHEBI:33384"/>
        <dbReference type="ChEBI" id="CHEBI:78442"/>
        <dbReference type="ChEBI" id="CHEBI:78533"/>
        <dbReference type="ChEBI" id="CHEBI:456215"/>
        <dbReference type="EC" id="6.1.1.11"/>
    </reaction>
</comment>
<comment type="catalytic activity">
    <reaction evidence="1">
        <text>tRNA(Sec) + L-serine + ATP = L-seryl-tRNA(Sec) + AMP + diphosphate + H(+)</text>
        <dbReference type="Rhea" id="RHEA:42580"/>
        <dbReference type="Rhea" id="RHEA-COMP:9742"/>
        <dbReference type="Rhea" id="RHEA-COMP:10128"/>
        <dbReference type="ChEBI" id="CHEBI:15378"/>
        <dbReference type="ChEBI" id="CHEBI:30616"/>
        <dbReference type="ChEBI" id="CHEBI:33019"/>
        <dbReference type="ChEBI" id="CHEBI:33384"/>
        <dbReference type="ChEBI" id="CHEBI:78442"/>
        <dbReference type="ChEBI" id="CHEBI:78533"/>
        <dbReference type="ChEBI" id="CHEBI:456215"/>
        <dbReference type="EC" id="6.1.1.11"/>
    </reaction>
</comment>
<comment type="pathway">
    <text evidence="1">Aminoacyl-tRNA biosynthesis; selenocysteinyl-tRNA(Sec) biosynthesis; L-seryl-tRNA(Sec) from L-serine and tRNA(Sec): step 1/1.</text>
</comment>
<comment type="subunit">
    <text evidence="1">Homodimer. The tRNA molecule binds across the dimer.</text>
</comment>
<comment type="subcellular location">
    <subcellularLocation>
        <location evidence="1">Cytoplasm</location>
    </subcellularLocation>
</comment>
<comment type="domain">
    <text evidence="1">Consists of two distinct domains, a catalytic core and a N-terminal extension that is involved in tRNA binding.</text>
</comment>
<comment type="similarity">
    <text evidence="1">Belongs to the class-II aminoacyl-tRNA synthetase family. Type-1 seryl-tRNA synthetase subfamily.</text>
</comment>
<proteinExistence type="inferred from homology"/>
<accession>C3MQH9</accession>
<evidence type="ECO:0000255" key="1">
    <source>
        <dbReference type="HAMAP-Rule" id="MF_00176"/>
    </source>
</evidence>
<sequence length="457" mass="53216">MSWSILEFLRKNPEELKNNLKRRAIDVSLVDKAVELDKKWRQVLQEVERLRHQHNVLSSQIPKLSGEERKKKIEESKNLLKILEDKEKELEKIEVERDRLLSSLPNLVADDVPNGPDDSYNIPIKFWGKFKVYEGDVEEFLRQTKDANVNYEIIKWKPKGHAEMLEDVLHLGNTLKAAEIAGSRFYYLFNDIVWLDFALLLFAIDYITQQGYTLVLPPYMLRGEVIQSVIDLDTFKDAIYKIENEDLYLIATAEHSIAAMFFKEEIEKDKLPLKFAGISPAFRKEAGAANKDLKGIFRVHQFHKVEQFIFSTPEDSWKYHAELITNAESIFQQLELPYRIVNIASGDLGACAAKKFDLEVWMPAQAKFREMVSCSNCTDWQAFRMKIRYVDRKNNKRGYVHTLNSTAIASTRTITAILENYQREDGVVEVPKVLRKYLEIFPKAPKDYIYPLKNKII</sequence>
<gene>
    <name evidence="1" type="primary">serS</name>
    <name type="ordered locus">LS215_1638</name>
</gene>
<protein>
    <recommendedName>
        <fullName evidence="1">Serine--tRNA ligase</fullName>
        <ecNumber evidence="1">6.1.1.11</ecNumber>
    </recommendedName>
    <alternativeName>
        <fullName evidence="1">Seryl-tRNA synthetase</fullName>
        <shortName evidence="1">SerRS</shortName>
    </alternativeName>
    <alternativeName>
        <fullName evidence="1">Seryl-tRNA(Ser/Sec) synthetase</fullName>
    </alternativeName>
</protein>
<feature type="chain" id="PRO_1000203771" description="Serine--tRNA ligase">
    <location>
        <begin position="1"/>
        <end position="457"/>
    </location>
</feature>
<feature type="binding site" evidence="1">
    <location>
        <begin position="252"/>
        <end position="254"/>
    </location>
    <ligand>
        <name>L-serine</name>
        <dbReference type="ChEBI" id="CHEBI:33384"/>
    </ligand>
</feature>
<feature type="binding site" evidence="1">
    <location>
        <begin position="283"/>
        <end position="285"/>
    </location>
    <ligand>
        <name>ATP</name>
        <dbReference type="ChEBI" id="CHEBI:30616"/>
    </ligand>
</feature>
<feature type="binding site" evidence="1">
    <location>
        <position position="299"/>
    </location>
    <ligand>
        <name>ATP</name>
        <dbReference type="ChEBI" id="CHEBI:30616"/>
    </ligand>
</feature>
<feature type="binding site" evidence="1">
    <location>
        <position position="306"/>
    </location>
    <ligand>
        <name>L-serine</name>
        <dbReference type="ChEBI" id="CHEBI:33384"/>
    </ligand>
</feature>
<feature type="binding site" evidence="1">
    <location>
        <begin position="370"/>
        <end position="373"/>
    </location>
    <ligand>
        <name>ATP</name>
        <dbReference type="ChEBI" id="CHEBI:30616"/>
    </ligand>
</feature>
<feature type="binding site" evidence="1">
    <location>
        <position position="406"/>
    </location>
    <ligand>
        <name>L-serine</name>
        <dbReference type="ChEBI" id="CHEBI:33384"/>
    </ligand>
</feature>
<name>SYS_SACI2</name>
<reference key="1">
    <citation type="journal article" date="2009" name="Proc. Natl. Acad. Sci. U.S.A.">
        <title>Biogeography of the Sulfolobus islandicus pan-genome.</title>
        <authorList>
            <person name="Reno M.L."/>
            <person name="Held N.L."/>
            <person name="Fields C.J."/>
            <person name="Burke P.V."/>
            <person name="Whitaker R.J."/>
        </authorList>
    </citation>
    <scope>NUCLEOTIDE SEQUENCE [LARGE SCALE GENOMIC DNA]</scope>
    <source>
        <strain>L.S.2.15 / Lassen #1</strain>
    </source>
</reference>
<keyword id="KW-0030">Aminoacyl-tRNA synthetase</keyword>
<keyword id="KW-0067">ATP-binding</keyword>
<keyword id="KW-0963">Cytoplasm</keyword>
<keyword id="KW-0436">Ligase</keyword>
<keyword id="KW-0547">Nucleotide-binding</keyword>
<keyword id="KW-0648">Protein biosynthesis</keyword>
<organism>
    <name type="scientific">Saccharolobus islandicus (strain L.S.2.15 / Lassen #1)</name>
    <name type="common">Sulfolobus islandicus</name>
    <dbReference type="NCBI Taxonomy" id="429572"/>
    <lineage>
        <taxon>Archaea</taxon>
        <taxon>Thermoproteota</taxon>
        <taxon>Thermoprotei</taxon>
        <taxon>Sulfolobales</taxon>
        <taxon>Sulfolobaceae</taxon>
        <taxon>Saccharolobus</taxon>
    </lineage>
</organism>